<organism evidence="8">
    <name type="scientific">Bordetella phage BPP-1</name>
    <dbReference type="NCBI Taxonomy" id="2885909"/>
    <lineage>
        <taxon>Viruses</taxon>
        <taxon>Duplodnaviria</taxon>
        <taxon>Heunggongvirae</taxon>
        <taxon>Uroviricota</taxon>
        <taxon>Caudoviricetes</taxon>
        <taxon>Rauchvirus</taxon>
        <taxon>Rauchvirus BPP1</taxon>
    </lineage>
</organism>
<dbReference type="EMBL" id="AY029185">
    <property type="protein sequence ID" value="AAR97674.1"/>
    <property type="molecule type" value="Genomic_DNA"/>
</dbReference>
<dbReference type="RefSeq" id="NP_958677.1">
    <property type="nucleotide sequence ID" value="NC_005357.1"/>
</dbReference>
<dbReference type="PDB" id="1YU0">
    <property type="method" value="X-ray"/>
    <property type="resolution" value="1.56 A"/>
    <property type="chains" value="A=1-381"/>
</dbReference>
<dbReference type="PDB" id="1YU1">
    <property type="method" value="X-ray"/>
    <property type="resolution" value="2.07 A"/>
    <property type="chains" value="A=1-381"/>
</dbReference>
<dbReference type="PDB" id="1YU2">
    <property type="method" value="X-ray"/>
    <property type="resolution" value="1.86 A"/>
    <property type="chains" value="A=1-381"/>
</dbReference>
<dbReference type="PDB" id="1YU3">
    <property type="method" value="X-ray"/>
    <property type="resolution" value="2.52 A"/>
    <property type="chains" value="A=1-381"/>
</dbReference>
<dbReference type="PDB" id="1YU4">
    <property type="method" value="X-ray"/>
    <property type="resolution" value="1.87 A"/>
    <property type="chains" value="A/B/C=1-381"/>
</dbReference>
<dbReference type="PDB" id="2IOU">
    <property type="method" value="X-ray"/>
    <property type="resolution" value="3.16 A"/>
    <property type="chains" value="A/B/C/D/E/F=5-380"/>
</dbReference>
<dbReference type="PDBsum" id="1YU0"/>
<dbReference type="PDBsum" id="1YU1"/>
<dbReference type="PDBsum" id="1YU2"/>
<dbReference type="PDBsum" id="1YU3"/>
<dbReference type="PDBsum" id="1YU4"/>
<dbReference type="PDBsum" id="2IOU"/>
<dbReference type="SMR" id="Q775D6"/>
<dbReference type="DIP" id="DIP-46043N"/>
<dbReference type="IntAct" id="Q775D6">
    <property type="interactions" value="1"/>
</dbReference>
<dbReference type="GeneID" id="2717224"/>
<dbReference type="KEGG" id="vg:2717224"/>
<dbReference type="EvolutionaryTrace" id="Q775D6"/>
<dbReference type="Proteomes" id="UP000001765">
    <property type="component" value="Genome"/>
</dbReference>
<dbReference type="GO" id="GO:0098024">
    <property type="term" value="C:virus tail, fiber"/>
    <property type="evidence" value="ECO:0007669"/>
    <property type="project" value="UniProtKB-KW"/>
</dbReference>
<dbReference type="GO" id="GO:0098671">
    <property type="term" value="P:adhesion receptor-mediated virion attachment to host cell"/>
    <property type="evidence" value="ECO:0007669"/>
    <property type="project" value="UniProtKB-KW"/>
</dbReference>
<dbReference type="GO" id="GO:0046718">
    <property type="term" value="P:symbiont entry into host cell"/>
    <property type="evidence" value="ECO:0007669"/>
    <property type="project" value="UniProtKB-KW"/>
</dbReference>
<dbReference type="GO" id="GO:0098678">
    <property type="term" value="P:viral tropism switching"/>
    <property type="evidence" value="ECO:0007669"/>
    <property type="project" value="UniProtKB-KW"/>
</dbReference>
<dbReference type="Gene3D" id="2.10.10.30">
    <property type="match status" value="1"/>
</dbReference>
<dbReference type="Gene3D" id="3.90.1580.10">
    <property type="entry name" value="paralog of FGE (formylglycine-generating enzyme)"/>
    <property type="match status" value="1"/>
</dbReference>
<dbReference type="Gene3D" id="2.80.20.10">
    <property type="entry name" value="Tail fiber receptor-binding protein"/>
    <property type="match status" value="1"/>
</dbReference>
<dbReference type="InterPro" id="IPR016187">
    <property type="entry name" value="CTDL_fold"/>
</dbReference>
<dbReference type="InterPro" id="IPR054114">
    <property type="entry name" value="Mtd_2nd"/>
</dbReference>
<dbReference type="InterPro" id="IPR041352">
    <property type="entry name" value="Mtd_N"/>
</dbReference>
<dbReference type="InterPro" id="IPR042095">
    <property type="entry name" value="SUMF_sf"/>
</dbReference>
<dbReference type="Pfam" id="PF21916">
    <property type="entry name" value="mtd_2nd"/>
    <property type="match status" value="1"/>
</dbReference>
<dbReference type="Pfam" id="PF18454">
    <property type="entry name" value="Mtd_N"/>
    <property type="match status" value="1"/>
</dbReference>
<dbReference type="SUPFAM" id="SSF141658">
    <property type="entry name" value="Bacteriophage trimeric proteins domain"/>
    <property type="match status" value="1"/>
</dbReference>
<dbReference type="SUPFAM" id="SSF56436">
    <property type="entry name" value="C-type lectin-like"/>
    <property type="match status" value="1"/>
</dbReference>
<proteinExistence type="evidence at protein level"/>
<reference key="1">
    <citation type="journal article" date="2004" name="J. Bacteriol.">
        <title>Genomic and genetic analysis of Bordetella bacteriophages encoding reverse transcriptase-mediated tropism-switching cassettes.</title>
        <authorList>
            <person name="Liu M."/>
            <person name="Gingery M."/>
            <person name="Doulatov S.R."/>
            <person name="Liu Y."/>
            <person name="Hodes A."/>
            <person name="Baker S."/>
            <person name="Davis P."/>
            <person name="Simmonds M."/>
            <person name="Churcher C."/>
            <person name="Mungall K."/>
            <person name="Quail M.A."/>
            <person name="Preston A."/>
            <person name="Harvill E.T."/>
            <person name="Maskell D.J."/>
            <person name="Eiserling F.A."/>
            <person name="Parkhill J."/>
            <person name="Miller J.F."/>
        </authorList>
    </citation>
    <scope>NUCLEOTIDE SEQUENCE [GENOMIC DNA]</scope>
</reference>
<reference key="2">
    <citation type="journal article" date="2004" name="Nature">
        <title>Tropism switching in Bordetella bacteriophage defines a family of diversity-generating retroelements.</title>
        <authorList>
            <person name="Doulatov S."/>
            <person name="Hodes A."/>
            <person name="Dai L."/>
            <person name="Mandhana N."/>
            <person name="Liu M."/>
            <person name="Deora R."/>
            <person name="Simons R.W."/>
            <person name="Zimmerly S."/>
            <person name="Miller J.F."/>
        </authorList>
    </citation>
    <scope>FUNCTION</scope>
    <scope>DOMAIN</scope>
</reference>
<reference key="3">
    <citation type="journal article" date="2010" name="Proc. Natl. Acad. Sci. U.S.A.">
        <title>Three-dimensional structure of tropism-switching Bordetella bacteriophage.</title>
        <authorList>
            <person name="Dai W."/>
            <person name="Hodes A."/>
            <person name="Hui W.H."/>
            <person name="Gingery M."/>
            <person name="Miller J.F."/>
            <person name="Zhou Z.H."/>
        </authorList>
    </citation>
    <scope>STRUCTURE BY ELECTRON MICROSCOPY OF THE VIRAL PARTICLE</scope>
    <scope>SUBCELLULAR LOCATION</scope>
</reference>
<reference evidence="9 10 11 12 13" key="4">
    <citation type="journal article" date="2005" name="Nat. Struct. Mol. Biol.">
        <title>The C-type lectin fold as an evolutionary solution for massive sequence variation.</title>
        <authorList>
            <person name="McMahon S.A."/>
            <person name="Miller J.L."/>
            <person name="Lawton J.A."/>
            <person name="Kerkow D.E."/>
            <person name="Hodes A."/>
            <person name="Marti-Renom M.A."/>
            <person name="Doulatov S."/>
            <person name="Narayanan E."/>
            <person name="Sali A."/>
            <person name="Miller J.F."/>
            <person name="Ghosh P."/>
        </authorList>
    </citation>
    <scope>X-RAY CRYSTALLOGRAPHY (1.56 ANGSTROMS)</scope>
    <scope>SUBUNIT</scope>
</reference>
<reference evidence="7" key="5">
    <citation type="journal article" date="2008" name="PLoS Biol.">
        <title>Selective ligand recognition by a diversity-generating retroelement variable protein.</title>
        <authorList>
            <person name="Miller J.L."/>
            <person name="Le Coq J."/>
            <person name="Hodes A."/>
            <person name="Barbalat R."/>
            <person name="Miller J.F."/>
            <person name="Ghosh P."/>
        </authorList>
    </citation>
    <scope>X-RAY CRYSTALLOGRAPHY (3.16 ANGSTROMS) OF 5-380</scope>
</reference>
<comment type="function">
    <text evidence="1">Tail fiber protein located at the distal ends of the fibers that binds to the adhesion receptors on the host surface, thereby determining the host range. The phage can alter its tropism by modifying this protein. Variants are expressed through a diversity-generating retroelement (DGR) that creates mutant copies of a template repeat and replaces the end of the tail fiber receptor-binding protein with these sequences, thus changing the host range. Milliards of variants of the fiber receptor-binding protein can be created with this system.</text>
</comment>
<comment type="subunit">
    <text evidence="2">Homotrimer.</text>
</comment>
<comment type="interaction">
    <interactant intactId="EBI-15556799">
        <id>Q775D6</id>
    </interactant>
    <interactant intactId="EBI-15556835">
        <id>Q03035</id>
        <label>prn</label>
    </interactant>
    <organismsDiffer>true</organismsDiffer>
    <experiments>8</experiments>
</comment>
<comment type="subcellular location">
    <subcellularLocation>
        <location>Virion</location>
    </subcellularLocation>
    <text evidence="3">Part of the tail fibers.</text>
</comment>
<comment type="domain">
    <text evidence="1">The C-terminus contains a variable sequence in which nucleotide subtitutions can be introduced at 23 sites by the DGR.</text>
</comment>
<sequence length="381" mass="39524">MSTAVQFRGGTTAQHATFTGAAREITVDTDKNTVVVHDGATAGGFPLARHDLVKTAFIKADKSAVAFTRTGNATASIKAGTIVEVNGKLVQFTADTAITMPALTAGTDYAIYVCDDGTVRADSNFSAPTGYTSTTARKVGGFHYAPGSNAAAQAGGNTTAQINEYSLWDIKFRPAALDPRGMTLVAGAFWADIYLLGVNHLTDGTSKYNVTIADGSASPKKSTKFGGDGSAAYSDGAWYNFAEVMTHHGKRLPNYNEFQALAFGTTEATSSGGTDVPTTGVNGTGATSAWNIFTSKWGVVQASGCLWTWGNEFGGVNGASEYTANTGGRGSVYAQPAAALFGGAWNGTSLSGSRAALWYSGPSFSFAFFGARGVCDHLILE</sequence>
<evidence type="ECO:0000269" key="1">
    <source>
    </source>
</evidence>
<evidence type="ECO:0000269" key="2">
    <source>
    </source>
</evidence>
<evidence type="ECO:0000269" key="3">
    <source>
    </source>
</evidence>
<evidence type="ECO:0000303" key="4">
    <source>
    </source>
</evidence>
<evidence type="ECO:0000305" key="5"/>
<evidence type="ECO:0000312" key="6">
    <source>
        <dbReference type="EMBL" id="AAR97674.1"/>
    </source>
</evidence>
<evidence type="ECO:0000312" key="7">
    <source>
        <dbReference type="PDB" id="2IOU"/>
    </source>
</evidence>
<evidence type="ECO:0000312" key="8">
    <source>
        <dbReference type="Proteomes" id="UP000001765"/>
    </source>
</evidence>
<evidence type="ECO:0007744" key="9">
    <source>
        <dbReference type="PDB" id="1YU0"/>
    </source>
</evidence>
<evidence type="ECO:0007744" key="10">
    <source>
        <dbReference type="PDB" id="1YU1"/>
    </source>
</evidence>
<evidence type="ECO:0007744" key="11">
    <source>
        <dbReference type="PDB" id="1YU2"/>
    </source>
</evidence>
<evidence type="ECO:0007744" key="12">
    <source>
        <dbReference type="PDB" id="1YU3"/>
    </source>
</evidence>
<evidence type="ECO:0007744" key="13">
    <source>
        <dbReference type="PDB" id="1YU4"/>
    </source>
</evidence>
<evidence type="ECO:0007829" key="14">
    <source>
        <dbReference type="PDB" id="1YU0"/>
    </source>
</evidence>
<evidence type="ECO:0007829" key="15">
    <source>
        <dbReference type="PDB" id="1YU2"/>
    </source>
</evidence>
<evidence type="ECO:0007829" key="16">
    <source>
        <dbReference type="PDB" id="1YU4"/>
    </source>
</evidence>
<evidence type="ECO:0007829" key="17">
    <source>
        <dbReference type="PDB" id="2IOU"/>
    </source>
</evidence>
<organismHost>
    <name type="scientific">Bordetella bronchiseptica</name>
    <name type="common">Alcaligenes bronchisepticus</name>
    <dbReference type="NCBI Taxonomy" id="518"/>
</organismHost>
<accession>Q775D6</accession>
<gene>
    <name evidence="6" type="primary">mtd</name>
</gene>
<name>FIBD_BPBPP</name>
<feature type="chain" id="PRO_0000432958" description="Tail fiber receptor-binding protein">
    <location>
        <begin position="1"/>
        <end position="381"/>
    </location>
</feature>
<feature type="helix" evidence="14">
    <location>
        <begin position="12"/>
        <end position="16"/>
    </location>
</feature>
<feature type="strand" evidence="14">
    <location>
        <begin position="25"/>
        <end position="28"/>
    </location>
</feature>
<feature type="turn" evidence="14">
    <location>
        <begin position="29"/>
        <end position="32"/>
    </location>
</feature>
<feature type="strand" evidence="14">
    <location>
        <begin position="33"/>
        <end position="36"/>
    </location>
</feature>
<feature type="strand" evidence="14">
    <location>
        <begin position="39"/>
        <end position="41"/>
    </location>
</feature>
<feature type="strand" evidence="16">
    <location>
        <begin position="45"/>
        <end position="47"/>
    </location>
</feature>
<feature type="helix" evidence="14">
    <location>
        <begin position="50"/>
        <end position="53"/>
    </location>
</feature>
<feature type="strand" evidence="14">
    <location>
        <begin position="66"/>
        <end position="71"/>
    </location>
</feature>
<feature type="strand" evidence="14">
    <location>
        <begin position="74"/>
        <end position="77"/>
    </location>
</feature>
<feature type="strand" evidence="14">
    <location>
        <begin position="81"/>
        <end position="85"/>
    </location>
</feature>
<feature type="strand" evidence="14">
    <location>
        <begin position="88"/>
        <end position="94"/>
    </location>
</feature>
<feature type="strand" evidence="14">
    <location>
        <begin position="107"/>
        <end position="114"/>
    </location>
</feature>
<feature type="strand" evidence="14">
    <location>
        <begin position="119"/>
        <end position="123"/>
    </location>
</feature>
<feature type="turn" evidence="14">
    <location>
        <begin position="133"/>
        <end position="135"/>
    </location>
</feature>
<feature type="strand" evidence="14">
    <location>
        <begin position="136"/>
        <end position="147"/>
    </location>
</feature>
<feature type="strand" evidence="14">
    <location>
        <begin position="151"/>
        <end position="154"/>
    </location>
</feature>
<feature type="helix" evidence="14">
    <location>
        <begin position="164"/>
        <end position="166"/>
    </location>
</feature>
<feature type="strand" evidence="14">
    <location>
        <begin position="172"/>
        <end position="177"/>
    </location>
</feature>
<feature type="strand" evidence="14">
    <location>
        <begin position="182"/>
        <end position="185"/>
    </location>
</feature>
<feature type="turn" evidence="14">
    <location>
        <begin position="186"/>
        <end position="188"/>
    </location>
</feature>
<feature type="strand" evidence="14">
    <location>
        <begin position="189"/>
        <end position="194"/>
    </location>
</feature>
<feature type="helix" evidence="14">
    <location>
        <begin position="200"/>
        <end position="203"/>
    </location>
</feature>
<feature type="strand" evidence="17">
    <location>
        <begin position="210"/>
        <end position="212"/>
    </location>
</feature>
<feature type="strand" evidence="15">
    <location>
        <begin position="215"/>
        <end position="217"/>
    </location>
</feature>
<feature type="turn" evidence="14">
    <location>
        <begin position="223"/>
        <end position="226"/>
    </location>
</feature>
<feature type="helix" evidence="14">
    <location>
        <begin position="238"/>
        <end position="247"/>
    </location>
</feature>
<feature type="helix" evidence="14">
    <location>
        <begin position="255"/>
        <end position="262"/>
    </location>
</feature>
<feature type="strand" evidence="14">
    <location>
        <begin position="273"/>
        <end position="275"/>
    </location>
</feature>
<feature type="helix" evidence="14">
    <location>
        <begin position="290"/>
        <end position="293"/>
    </location>
</feature>
<feature type="strand" evidence="14">
    <location>
        <begin position="303"/>
        <end position="305"/>
    </location>
</feature>
<feature type="strand" evidence="14">
    <location>
        <begin position="307"/>
        <end position="317"/>
    </location>
</feature>
<feature type="strand" evidence="14">
    <location>
        <begin position="326"/>
        <end position="329"/>
    </location>
</feature>
<feature type="strand" evidence="14">
    <location>
        <begin position="332"/>
        <end position="334"/>
    </location>
</feature>
<feature type="strand" evidence="14">
    <location>
        <begin position="336"/>
        <end position="342"/>
    </location>
</feature>
<feature type="helix" evidence="14">
    <location>
        <begin position="348"/>
        <end position="350"/>
    </location>
</feature>
<feature type="strand" evidence="14">
    <location>
        <begin position="374"/>
        <end position="379"/>
    </location>
</feature>
<protein>
    <recommendedName>
        <fullName evidence="5">Tail fiber receptor-binding protein</fullName>
    </recommendedName>
    <alternativeName>
        <fullName evidence="4">Major tropism determinant protein</fullName>
    </alternativeName>
</protein>
<keyword id="KW-0002">3D-structure</keyword>
<keyword id="KW-0945">Host-virus interaction</keyword>
<keyword id="KW-0426">Late protein</keyword>
<keyword id="KW-1185">Reference proteome</keyword>
<keyword id="KW-1233">Viral attachment to host adhesion receptor</keyword>
<keyword id="KW-1161">Viral attachment to host cell</keyword>
<keyword id="KW-1264">Viral receptor tropism switching</keyword>
<keyword id="KW-1230">Viral tail fiber protein</keyword>
<keyword id="KW-1227">Viral tail protein</keyword>
<keyword id="KW-0946">Virion</keyword>
<keyword id="KW-1160">Virus entry into host cell</keyword>